<organism>
    <name type="scientific">Enterobacteria phage 82</name>
    <name type="common">Bacteriophage 82</name>
    <dbReference type="NCBI Taxonomy" id="10705"/>
    <lineage>
        <taxon>Viruses</taxon>
        <taxon>Duplodnaviria</taxon>
        <taxon>Heunggongvirae</taxon>
        <taxon>Uroviricota</taxon>
        <taxon>Caudoviricetes</taxon>
        <taxon>Lambdavirus</taxon>
    </lineage>
</organism>
<keyword id="KW-0238">DNA-binding</keyword>
<keyword id="KW-0804">Transcription</keyword>
<keyword id="KW-0805">Transcription regulation</keyword>
<keyword id="KW-0806">Transcription termination</keyword>
<evidence type="ECO:0000255" key="1"/>
<evidence type="ECO:0000305" key="2"/>
<feature type="chain" id="PRO_0000073886" description="Antitermination protein Q">
    <location>
        <begin position="1"/>
        <end position="229"/>
    </location>
</feature>
<feature type="DNA-binding region" evidence="1">
    <location>
        <begin position="14"/>
        <end position="32"/>
    </location>
</feature>
<gene>
    <name type="primary">Q</name>
</gene>
<protein>
    <recommendedName>
        <fullName>Antitermination protein Q</fullName>
    </recommendedName>
</protein>
<name>REGQ_BP82</name>
<accession>P13870</accession>
<organismHost>
    <name type="scientific">Escherichia coli</name>
    <dbReference type="NCBI Taxonomy" id="562"/>
</organismHost>
<dbReference type="EMBL" id="J02803">
    <property type="protein sequence ID" value="AAA32298.1"/>
    <property type="molecule type" value="Genomic_DNA"/>
</dbReference>
<dbReference type="EMBL" id="X92588">
    <property type="protein sequence ID" value="CAA63332.1"/>
    <property type="molecule type" value="Genomic_DNA"/>
</dbReference>
<dbReference type="PIR" id="A29791">
    <property type="entry name" value="PQBP82"/>
</dbReference>
<dbReference type="SMR" id="P13870"/>
<dbReference type="GO" id="GO:0003677">
    <property type="term" value="F:DNA binding"/>
    <property type="evidence" value="ECO:0007669"/>
    <property type="project" value="UniProtKB-KW"/>
</dbReference>
<dbReference type="GO" id="GO:0006353">
    <property type="term" value="P:DNA-templated transcription termination"/>
    <property type="evidence" value="ECO:0007669"/>
    <property type="project" value="UniProtKB-KW"/>
</dbReference>
<dbReference type="InterPro" id="IPR010455">
    <property type="entry name" value="Phage_82_GpQ"/>
</dbReference>
<dbReference type="Pfam" id="PF06323">
    <property type="entry name" value="Phage_antiter_Q"/>
    <property type="match status" value="1"/>
</dbReference>
<dbReference type="PIRSF" id="PIRSF004417">
    <property type="entry name" value="Anti_term_Q"/>
    <property type="match status" value="1"/>
</dbReference>
<sequence>MNTQYLQYVREQLIVATADLSGATKGQLEAWLEHAQFDTGTYKRKKPRILDEVTGRMITLDNPPISGKQSYAKGSSIALVSQVEFSTSSWRRAVLSLEEHQKAWLLWSYSESVRWEHQVTITQWAWSEFKTLLGTRKIAGKTLERLKKLIWLAAQDVKNELAGRKTYEYQELASLVGVTSKNWSETFTERWVAMKHIFLQLDSEALLLLTRTRSKQKATFSQQNIAKLD</sequence>
<comment type="function">
    <text>Positively regulates expression of the phage late gene operons. Bacterial host RNA polymerase modified by antitermination proteins transcribes through termination sites that otherwise prevent expression of the regulated genes.</text>
</comment>
<comment type="similarity">
    <text evidence="2">Belongs to the phage antitermination Q type 1 family.</text>
</comment>
<proteinExistence type="inferred from homology"/>
<reference key="1">
    <citation type="journal article" date="1987" name="J. Biol. Chem.">
        <title>Bacteriophage 82 gene Q and Q protein. Sequence, overproduction, and activity as a transcription antiterminator in vitro.</title>
        <authorList>
            <person name="Goliger J.A."/>
            <person name="Roberts J.W."/>
        </authorList>
    </citation>
    <scope>NUCLEOTIDE SEQUENCE [GENOMIC DNA]</scope>
</reference>
<reference key="2">
    <citation type="journal article" date="1996" name="J. Mol. Biol.">
        <title>Holliday junction resolvases encoded by homologous rusA genes in Escherichia coli K-12 and phage 82.</title>
        <authorList>
            <person name="Mahdi A.A."/>
            <person name="Sharples G.J."/>
            <person name="Mandal T.N."/>
            <person name="Lloyd R.G."/>
        </authorList>
    </citation>
    <scope>NUCLEOTIDE SEQUENCE [GENOMIC DNA]</scope>
</reference>